<feature type="chain" id="PRO_0000104621" description="Large ribosomal subunit protein uL30">
    <location>
        <begin position="1"/>
        <end position="152"/>
    </location>
</feature>
<sequence>MFAVVRMRGTVDVHRKIKETLKMLRLHKRYHCVVIPDTPSYRGMLQVVKDYVAYGEINAETLALLLRLRGRLTGNRKLTDEYVKEKTGYETIEEFAKAVVEGKASLKDLPDLKPVFRLHPPRKGIKNIKWHYPRGNLGYHGEEINRLLYKMR</sequence>
<keyword id="KW-1185">Reference proteome</keyword>
<keyword id="KW-0687">Ribonucleoprotein</keyword>
<keyword id="KW-0689">Ribosomal protein</keyword>
<name>RL30_ARCFU</name>
<proteinExistence type="inferred from homology"/>
<accession>O28375</accession>
<organism>
    <name type="scientific">Archaeoglobus fulgidus (strain ATCC 49558 / DSM 4304 / JCM 9628 / NBRC 100126 / VC-16)</name>
    <dbReference type="NCBI Taxonomy" id="224325"/>
    <lineage>
        <taxon>Archaea</taxon>
        <taxon>Methanobacteriati</taxon>
        <taxon>Methanobacteriota</taxon>
        <taxon>Archaeoglobi</taxon>
        <taxon>Archaeoglobales</taxon>
        <taxon>Archaeoglobaceae</taxon>
        <taxon>Archaeoglobus</taxon>
    </lineage>
</organism>
<gene>
    <name evidence="1" type="primary">rpl30</name>
    <name type="ordered locus">AF_1904</name>
</gene>
<dbReference type="EMBL" id="AE000782">
    <property type="protein sequence ID" value="AAB89345.1"/>
    <property type="molecule type" value="Genomic_DNA"/>
</dbReference>
<dbReference type="PIR" id="G69487">
    <property type="entry name" value="G69487"/>
</dbReference>
<dbReference type="SMR" id="O28375"/>
<dbReference type="STRING" id="224325.AF_1904"/>
<dbReference type="PaxDb" id="224325-AF_1904"/>
<dbReference type="EnsemblBacteria" id="AAB89345">
    <property type="protein sequence ID" value="AAB89345"/>
    <property type="gene ID" value="AF_1904"/>
</dbReference>
<dbReference type="KEGG" id="afu:AF_1904"/>
<dbReference type="eggNOG" id="arCOG04086">
    <property type="taxonomic scope" value="Archaea"/>
</dbReference>
<dbReference type="HOGENOM" id="CLU_055156_6_0_2"/>
<dbReference type="OrthoDB" id="6379at2157"/>
<dbReference type="PhylomeDB" id="O28375"/>
<dbReference type="Proteomes" id="UP000002199">
    <property type="component" value="Chromosome"/>
</dbReference>
<dbReference type="GO" id="GO:0022625">
    <property type="term" value="C:cytosolic large ribosomal subunit"/>
    <property type="evidence" value="ECO:0007669"/>
    <property type="project" value="TreeGrafter"/>
</dbReference>
<dbReference type="GO" id="GO:0003723">
    <property type="term" value="F:RNA binding"/>
    <property type="evidence" value="ECO:0007669"/>
    <property type="project" value="TreeGrafter"/>
</dbReference>
<dbReference type="GO" id="GO:0003735">
    <property type="term" value="F:structural constituent of ribosome"/>
    <property type="evidence" value="ECO:0007669"/>
    <property type="project" value="InterPro"/>
</dbReference>
<dbReference type="GO" id="GO:0000463">
    <property type="term" value="P:maturation of LSU-rRNA from tricistronic rRNA transcript (SSU-rRNA, 5.8S rRNA, LSU-rRNA)"/>
    <property type="evidence" value="ECO:0007669"/>
    <property type="project" value="TreeGrafter"/>
</dbReference>
<dbReference type="GO" id="GO:0006412">
    <property type="term" value="P:translation"/>
    <property type="evidence" value="ECO:0007669"/>
    <property type="project" value="UniProtKB-UniRule"/>
</dbReference>
<dbReference type="CDD" id="cd01657">
    <property type="entry name" value="Ribosomal_L7_archeal_euk"/>
    <property type="match status" value="1"/>
</dbReference>
<dbReference type="FunFam" id="1.10.15.30:FF:000002">
    <property type="entry name" value="50S ribosomal protein L30"/>
    <property type="match status" value="1"/>
</dbReference>
<dbReference type="Gene3D" id="1.10.15.30">
    <property type="match status" value="1"/>
</dbReference>
<dbReference type="Gene3D" id="3.30.1390.20">
    <property type="entry name" value="Ribosomal protein L30, ferredoxin-like fold domain"/>
    <property type="match status" value="1"/>
</dbReference>
<dbReference type="HAMAP" id="MF_01371_A">
    <property type="entry name" value="Ribosomal_uL30_A"/>
    <property type="match status" value="1"/>
</dbReference>
<dbReference type="InterPro" id="IPR036919">
    <property type="entry name" value="Ribo_uL30_ferredoxin-like_sf"/>
</dbReference>
<dbReference type="InterPro" id="IPR039699">
    <property type="entry name" value="Ribosomal_uL30"/>
</dbReference>
<dbReference type="InterPro" id="IPR005997">
    <property type="entry name" value="Ribosomal_uL30_arc"/>
</dbReference>
<dbReference type="InterPro" id="IPR018038">
    <property type="entry name" value="Ribosomal_uL30_CS"/>
</dbReference>
<dbReference type="InterPro" id="IPR035808">
    <property type="entry name" value="Ribosomal_uL30_euk_arc"/>
</dbReference>
<dbReference type="InterPro" id="IPR016082">
    <property type="entry name" value="Ribosomal_uL30_ferredoxin-like"/>
</dbReference>
<dbReference type="NCBIfam" id="NF004711">
    <property type="entry name" value="PRK06049.1"/>
    <property type="match status" value="1"/>
</dbReference>
<dbReference type="NCBIfam" id="TIGR01309">
    <property type="entry name" value="uL30_arch"/>
    <property type="match status" value="1"/>
</dbReference>
<dbReference type="PANTHER" id="PTHR11524">
    <property type="entry name" value="60S RIBOSOMAL PROTEIN L7"/>
    <property type="match status" value="1"/>
</dbReference>
<dbReference type="PANTHER" id="PTHR11524:SF16">
    <property type="entry name" value="LARGE RIBOSOMAL SUBUNIT PROTEIN UL30"/>
    <property type="match status" value="1"/>
</dbReference>
<dbReference type="Pfam" id="PF00327">
    <property type="entry name" value="Ribosomal_L30"/>
    <property type="match status" value="1"/>
</dbReference>
<dbReference type="SUPFAM" id="SSF55129">
    <property type="entry name" value="Ribosomal protein L30p/L7e"/>
    <property type="match status" value="1"/>
</dbReference>
<dbReference type="PROSITE" id="PS00634">
    <property type="entry name" value="RIBOSOMAL_L30"/>
    <property type="match status" value="1"/>
</dbReference>
<reference key="1">
    <citation type="journal article" date="1997" name="Nature">
        <title>The complete genome sequence of the hyperthermophilic, sulphate-reducing archaeon Archaeoglobus fulgidus.</title>
        <authorList>
            <person name="Klenk H.-P."/>
            <person name="Clayton R.A."/>
            <person name="Tomb J.-F."/>
            <person name="White O."/>
            <person name="Nelson K.E."/>
            <person name="Ketchum K.A."/>
            <person name="Dodson R.J."/>
            <person name="Gwinn M.L."/>
            <person name="Hickey E.K."/>
            <person name="Peterson J.D."/>
            <person name="Richardson D.L."/>
            <person name="Kerlavage A.R."/>
            <person name="Graham D.E."/>
            <person name="Kyrpides N.C."/>
            <person name="Fleischmann R.D."/>
            <person name="Quackenbush J."/>
            <person name="Lee N.H."/>
            <person name="Sutton G.G."/>
            <person name="Gill S.R."/>
            <person name="Kirkness E.F."/>
            <person name="Dougherty B.A."/>
            <person name="McKenney K."/>
            <person name="Adams M.D."/>
            <person name="Loftus B.J."/>
            <person name="Peterson S.N."/>
            <person name="Reich C.I."/>
            <person name="McNeil L.K."/>
            <person name="Badger J.H."/>
            <person name="Glodek A."/>
            <person name="Zhou L."/>
            <person name="Overbeek R."/>
            <person name="Gocayne J.D."/>
            <person name="Weidman J.F."/>
            <person name="McDonald L.A."/>
            <person name="Utterback T.R."/>
            <person name="Cotton M.D."/>
            <person name="Spriggs T."/>
            <person name="Artiach P."/>
            <person name="Kaine B.P."/>
            <person name="Sykes S.M."/>
            <person name="Sadow P.W."/>
            <person name="D'Andrea K.P."/>
            <person name="Bowman C."/>
            <person name="Fujii C."/>
            <person name="Garland S.A."/>
            <person name="Mason T.M."/>
            <person name="Olsen G.J."/>
            <person name="Fraser C.M."/>
            <person name="Smith H.O."/>
            <person name="Woese C.R."/>
            <person name="Venter J.C."/>
        </authorList>
    </citation>
    <scope>NUCLEOTIDE SEQUENCE [LARGE SCALE GENOMIC DNA]</scope>
    <source>
        <strain>ATCC 49558 / DSM 4304 / JCM 9628 / NBRC 100126 / VC-16</strain>
    </source>
</reference>
<protein>
    <recommendedName>
        <fullName evidence="1">Large ribosomal subunit protein uL30</fullName>
    </recommendedName>
    <alternativeName>
        <fullName evidence="2">50S ribosomal protein L30</fullName>
    </alternativeName>
</protein>
<evidence type="ECO:0000255" key="1">
    <source>
        <dbReference type="HAMAP-Rule" id="MF_01371"/>
    </source>
</evidence>
<evidence type="ECO:0000305" key="2"/>
<comment type="subunit">
    <text evidence="1">Part of the 50S ribosomal subunit.</text>
</comment>
<comment type="similarity">
    <text evidence="1">Belongs to the universal ribosomal protein uL30 family.</text>
</comment>